<accession>C0RH35</accession>
<proteinExistence type="inferred from homology"/>
<organism>
    <name type="scientific">Brucella melitensis biotype 2 (strain ATCC 23457)</name>
    <dbReference type="NCBI Taxonomy" id="546272"/>
    <lineage>
        <taxon>Bacteria</taxon>
        <taxon>Pseudomonadati</taxon>
        <taxon>Pseudomonadota</taxon>
        <taxon>Alphaproteobacteria</taxon>
        <taxon>Hyphomicrobiales</taxon>
        <taxon>Brucellaceae</taxon>
        <taxon>Brucella/Ochrobactrum group</taxon>
        <taxon>Brucella</taxon>
    </lineage>
</organism>
<dbReference type="EMBL" id="CP001488">
    <property type="protein sequence ID" value="ACO00143.1"/>
    <property type="molecule type" value="Genomic_DNA"/>
</dbReference>
<dbReference type="RefSeq" id="WP_002963483.1">
    <property type="nucleotide sequence ID" value="NC_012441.1"/>
</dbReference>
<dbReference type="SMR" id="C0RH35"/>
<dbReference type="GeneID" id="97534292"/>
<dbReference type="KEGG" id="bmi:BMEA_A0356"/>
<dbReference type="HOGENOM" id="CLU_095787_0_1_5"/>
<dbReference type="Proteomes" id="UP000001748">
    <property type="component" value="Chromosome I"/>
</dbReference>
<dbReference type="GO" id="GO:0005886">
    <property type="term" value="C:plasma membrane"/>
    <property type="evidence" value="ECO:0007669"/>
    <property type="project" value="UniProtKB-SubCell"/>
</dbReference>
<dbReference type="GO" id="GO:0008381">
    <property type="term" value="F:mechanosensitive monoatomic ion channel activity"/>
    <property type="evidence" value="ECO:0007669"/>
    <property type="project" value="UniProtKB-UniRule"/>
</dbReference>
<dbReference type="Gene3D" id="1.10.1200.120">
    <property type="entry name" value="Large-conductance mechanosensitive channel, MscL, domain 1"/>
    <property type="match status" value="1"/>
</dbReference>
<dbReference type="HAMAP" id="MF_00115">
    <property type="entry name" value="MscL"/>
    <property type="match status" value="1"/>
</dbReference>
<dbReference type="InterPro" id="IPR019823">
    <property type="entry name" value="Mechanosensitive_channel_CS"/>
</dbReference>
<dbReference type="InterPro" id="IPR001185">
    <property type="entry name" value="MS_channel"/>
</dbReference>
<dbReference type="InterPro" id="IPR037673">
    <property type="entry name" value="MSC/AndL"/>
</dbReference>
<dbReference type="InterPro" id="IPR036019">
    <property type="entry name" value="MscL_channel"/>
</dbReference>
<dbReference type="NCBIfam" id="TIGR00220">
    <property type="entry name" value="mscL"/>
    <property type="match status" value="1"/>
</dbReference>
<dbReference type="NCBIfam" id="NF001843">
    <property type="entry name" value="PRK00567.1-4"/>
    <property type="match status" value="1"/>
</dbReference>
<dbReference type="NCBIfam" id="NF010557">
    <property type="entry name" value="PRK13952.1"/>
    <property type="match status" value="1"/>
</dbReference>
<dbReference type="PANTHER" id="PTHR30266:SF2">
    <property type="entry name" value="LARGE-CONDUCTANCE MECHANOSENSITIVE CHANNEL"/>
    <property type="match status" value="1"/>
</dbReference>
<dbReference type="PANTHER" id="PTHR30266">
    <property type="entry name" value="MECHANOSENSITIVE CHANNEL MSCL"/>
    <property type="match status" value="1"/>
</dbReference>
<dbReference type="Pfam" id="PF01741">
    <property type="entry name" value="MscL"/>
    <property type="match status" value="1"/>
</dbReference>
<dbReference type="PRINTS" id="PR01264">
    <property type="entry name" value="MECHCHANNEL"/>
</dbReference>
<dbReference type="SUPFAM" id="SSF81330">
    <property type="entry name" value="Gated mechanosensitive channel"/>
    <property type="match status" value="1"/>
</dbReference>
<dbReference type="PROSITE" id="PS01327">
    <property type="entry name" value="MSCL"/>
    <property type="match status" value="1"/>
</dbReference>
<protein>
    <recommendedName>
        <fullName evidence="1">Large-conductance mechanosensitive channel</fullName>
    </recommendedName>
</protein>
<gene>
    <name evidence="1" type="primary">mscL</name>
    <name type="ordered locus">BMEA_A0356</name>
</gene>
<name>MSCL_BRUMB</name>
<comment type="function">
    <text evidence="1">Channel that opens in response to stretch forces in the membrane lipid bilayer. May participate in the regulation of osmotic pressure changes within the cell.</text>
</comment>
<comment type="subunit">
    <text evidence="1">Homopentamer.</text>
</comment>
<comment type="subcellular location">
    <subcellularLocation>
        <location evidence="1">Cell inner membrane</location>
        <topology evidence="1">Multi-pass membrane protein</topology>
    </subcellularLocation>
</comment>
<comment type="similarity">
    <text evidence="1">Belongs to the MscL family.</text>
</comment>
<feature type="chain" id="PRO_1000191357" description="Large-conductance mechanosensitive channel">
    <location>
        <begin position="1"/>
        <end position="138"/>
    </location>
</feature>
<feature type="transmembrane region" description="Helical" evidence="1">
    <location>
        <begin position="15"/>
        <end position="35"/>
    </location>
</feature>
<feature type="transmembrane region" description="Helical" evidence="1">
    <location>
        <begin position="38"/>
        <end position="58"/>
    </location>
</feature>
<feature type="transmembrane region" description="Helical" evidence="1">
    <location>
        <begin position="80"/>
        <end position="100"/>
    </location>
</feature>
<evidence type="ECO:0000255" key="1">
    <source>
        <dbReference type="HAMAP-Rule" id="MF_00115"/>
    </source>
</evidence>
<sequence>MLKEFQEFALKGNMVDLAIGVIIGGAFGGLVNSIVNDIIMPIIGLITGGIDFSNMFIQLAGDPKTTLAAAREAGATIAYGNFITLLINFLIIAWVLFLVVKLMNRLKKREEAKPAPAAPSEEVLLTEIRDILAKQQKA</sequence>
<reference key="1">
    <citation type="submission" date="2009-03" db="EMBL/GenBank/DDBJ databases">
        <title>Brucella melitensis ATCC 23457 whole genome shotgun sequencing project.</title>
        <authorList>
            <person name="Setubal J.C."/>
            <person name="Boyle S."/>
            <person name="Crasta O.R."/>
            <person name="Gillespie J.J."/>
            <person name="Kenyon R.W."/>
            <person name="Lu J."/>
            <person name="Mane S."/>
            <person name="Nagrani S."/>
            <person name="Shallom J.M."/>
            <person name="Shallom S."/>
            <person name="Shukla M."/>
            <person name="Snyder E.E."/>
            <person name="Sobral B.W."/>
            <person name="Wattam A.R."/>
            <person name="Will R."/>
            <person name="Williams K."/>
            <person name="Yoo H."/>
            <person name="Munk C."/>
            <person name="Tapia R."/>
            <person name="Han C."/>
            <person name="Detter J.C."/>
            <person name="Bruce D."/>
            <person name="Brettin T.S."/>
        </authorList>
    </citation>
    <scope>NUCLEOTIDE SEQUENCE [LARGE SCALE GENOMIC DNA]</scope>
    <source>
        <strain>ATCC 23457</strain>
    </source>
</reference>
<keyword id="KW-0997">Cell inner membrane</keyword>
<keyword id="KW-1003">Cell membrane</keyword>
<keyword id="KW-0407">Ion channel</keyword>
<keyword id="KW-0406">Ion transport</keyword>
<keyword id="KW-0472">Membrane</keyword>
<keyword id="KW-0812">Transmembrane</keyword>
<keyword id="KW-1133">Transmembrane helix</keyword>
<keyword id="KW-0813">Transport</keyword>